<accession>O62819</accession>
<organism>
    <name type="scientific">Monodelphis domestica</name>
    <name type="common">Gray short-tailed opossum</name>
    <dbReference type="NCBI Taxonomy" id="13616"/>
    <lineage>
        <taxon>Eukaryota</taxon>
        <taxon>Metazoa</taxon>
        <taxon>Chordata</taxon>
        <taxon>Craniata</taxon>
        <taxon>Vertebrata</taxon>
        <taxon>Euteleostomi</taxon>
        <taxon>Mammalia</taxon>
        <taxon>Metatheria</taxon>
        <taxon>Didelphimorphia</taxon>
        <taxon>Didelphidae</taxon>
        <taxon>Monodelphis</taxon>
    </lineage>
</organism>
<sequence length="228" mass="26071">MCPKGSSVKGSLLLLLLMSSRFLFKAVESLPICPSGAVNCQVSLSDLFDRAVMLSHYIHSPSSEMFNEFDERYAQGRGFITKAINSCHTSSLSTPEDKEQAQQIRHEDLLNLVLRVLRSWSEPLYHLVTEVRSMQEAPDTILLKAMEIEEQNKRLLEGMEKIVGQVHPGDRENEVYSVWSGLPSLQMADEDTRLFAFYNLLHCLRRDSHKIDNYLKLLKCRLIHDSNC</sequence>
<reference key="1">
    <citation type="submission" date="1998-05" db="EMBL/GenBank/DDBJ databases">
        <title>Cloning and characterization of pituitary prolactin cDNA from the marsupial Monodelphis domestica.</title>
        <authorList>
            <person name="Kacsoh B."/>
            <person name="Soos G."/>
        </authorList>
    </citation>
    <scope>NUCLEOTIDE SEQUENCE [MRNA]</scope>
    <source>
        <tissue>Pituitary</tissue>
    </source>
</reference>
<name>PRL_MONDO</name>
<comment type="function">
    <text>Prolactin acts primarily on the mammary gland by promoting lactation.</text>
</comment>
<comment type="subunit">
    <text evidence="2">Interacts with PRLR.</text>
</comment>
<comment type="subcellular location">
    <subcellularLocation>
        <location>Secreted</location>
    </subcellularLocation>
</comment>
<comment type="similarity">
    <text evidence="4">Belongs to the somatotropin/prolactin family.</text>
</comment>
<feature type="signal peptide" evidence="1">
    <location>
        <begin position="1"/>
        <end position="29"/>
    </location>
</feature>
<feature type="chain" id="PRO_0000032920" description="Prolactin">
    <location>
        <begin position="30"/>
        <end position="228"/>
    </location>
</feature>
<feature type="modified residue" description="Phosphoserine" evidence="3">
    <location>
        <position position="55"/>
    </location>
</feature>
<feature type="modified residue" description="Phosphoserine" evidence="3">
    <location>
        <position position="63"/>
    </location>
</feature>
<feature type="modified residue" description="Phosphoserine" evidence="3">
    <location>
        <position position="119"/>
    </location>
</feature>
<feature type="disulfide bond" evidence="1">
    <location>
        <begin position="33"/>
        <end position="40"/>
    </location>
</feature>
<feature type="disulfide bond" evidence="1">
    <location>
        <begin position="87"/>
        <end position="203"/>
    </location>
</feature>
<feature type="disulfide bond" evidence="1">
    <location>
        <begin position="220"/>
        <end position="228"/>
    </location>
</feature>
<proteinExistence type="evidence at transcript level"/>
<protein>
    <recommendedName>
        <fullName>Prolactin</fullName>
        <shortName>PRL</shortName>
    </recommendedName>
</protein>
<keyword id="KW-1015">Disulfide bond</keyword>
<keyword id="KW-0372">Hormone</keyword>
<keyword id="KW-0421">Lactation</keyword>
<keyword id="KW-0597">Phosphoprotein</keyword>
<keyword id="KW-1185">Reference proteome</keyword>
<keyword id="KW-0964">Secreted</keyword>
<keyword id="KW-0732">Signal</keyword>
<evidence type="ECO:0000250" key="1"/>
<evidence type="ECO:0000250" key="2">
    <source>
        <dbReference type="UniProtKB" id="P01236"/>
    </source>
</evidence>
<evidence type="ECO:0000250" key="3">
    <source>
        <dbReference type="UniProtKB" id="P01239"/>
    </source>
</evidence>
<evidence type="ECO:0000305" key="4"/>
<gene>
    <name type="primary">PRL</name>
</gene>
<dbReference type="EMBL" id="AF067726">
    <property type="protein sequence ID" value="AAC18398.1"/>
    <property type="molecule type" value="mRNA"/>
</dbReference>
<dbReference type="RefSeq" id="NP_001028166.1">
    <property type="nucleotide sequence ID" value="NM_001032994.1"/>
</dbReference>
<dbReference type="SMR" id="O62819"/>
<dbReference type="FunCoup" id="O62819">
    <property type="interactions" value="54"/>
</dbReference>
<dbReference type="STRING" id="13616.ENSMODP00000014194"/>
<dbReference type="GeneID" id="100017831"/>
<dbReference type="KEGG" id="mdo:100017831"/>
<dbReference type="CTD" id="5617"/>
<dbReference type="eggNOG" id="ENOG502QYU3">
    <property type="taxonomic scope" value="Eukaryota"/>
</dbReference>
<dbReference type="InParanoid" id="O62819"/>
<dbReference type="OrthoDB" id="9946219at2759"/>
<dbReference type="Proteomes" id="UP000002280">
    <property type="component" value="Unplaced"/>
</dbReference>
<dbReference type="GO" id="GO:0005615">
    <property type="term" value="C:extracellular space"/>
    <property type="evidence" value="ECO:0000318"/>
    <property type="project" value="GO_Central"/>
</dbReference>
<dbReference type="GO" id="GO:0005179">
    <property type="term" value="F:hormone activity"/>
    <property type="evidence" value="ECO:0000318"/>
    <property type="project" value="GO_Central"/>
</dbReference>
<dbReference type="GO" id="GO:0005148">
    <property type="term" value="F:prolactin receptor binding"/>
    <property type="evidence" value="ECO:0000318"/>
    <property type="project" value="GO_Central"/>
</dbReference>
<dbReference type="GO" id="GO:0007166">
    <property type="term" value="P:cell surface receptor signaling pathway"/>
    <property type="evidence" value="ECO:0000318"/>
    <property type="project" value="GO_Central"/>
</dbReference>
<dbReference type="GO" id="GO:0007565">
    <property type="term" value="P:female pregnancy"/>
    <property type="evidence" value="ECO:0000318"/>
    <property type="project" value="GO_Central"/>
</dbReference>
<dbReference type="GO" id="GO:0007595">
    <property type="term" value="P:lactation"/>
    <property type="evidence" value="ECO:0007669"/>
    <property type="project" value="UniProtKB-KW"/>
</dbReference>
<dbReference type="GO" id="GO:0030879">
    <property type="term" value="P:mammary gland development"/>
    <property type="evidence" value="ECO:0000318"/>
    <property type="project" value="GO_Central"/>
</dbReference>
<dbReference type="GO" id="GO:1903489">
    <property type="term" value="P:positive regulation of lactation"/>
    <property type="evidence" value="ECO:0000318"/>
    <property type="project" value="GO_Central"/>
</dbReference>
<dbReference type="GO" id="GO:0046427">
    <property type="term" value="P:positive regulation of receptor signaling pathway via JAK-STAT"/>
    <property type="evidence" value="ECO:0000318"/>
    <property type="project" value="GO_Central"/>
</dbReference>
<dbReference type="GO" id="GO:0031667">
    <property type="term" value="P:response to nutrient levels"/>
    <property type="evidence" value="ECO:0000318"/>
    <property type="project" value="GO_Central"/>
</dbReference>
<dbReference type="CDD" id="cd10288">
    <property type="entry name" value="prolactin_like"/>
    <property type="match status" value="1"/>
</dbReference>
<dbReference type="FunFam" id="1.20.1250.10:FF:000003">
    <property type="entry name" value="Prolactin"/>
    <property type="match status" value="1"/>
</dbReference>
<dbReference type="Gene3D" id="1.20.1250.10">
    <property type="match status" value="1"/>
</dbReference>
<dbReference type="InterPro" id="IPR009079">
    <property type="entry name" value="4_helix_cytokine-like_core"/>
</dbReference>
<dbReference type="InterPro" id="IPR001400">
    <property type="entry name" value="Somatotropin/Prolactin"/>
</dbReference>
<dbReference type="InterPro" id="IPR018116">
    <property type="entry name" value="Somatotropin_CS"/>
</dbReference>
<dbReference type="PANTHER" id="PTHR11417:SF5">
    <property type="entry name" value="PROLACTIN"/>
    <property type="match status" value="1"/>
</dbReference>
<dbReference type="PANTHER" id="PTHR11417">
    <property type="entry name" value="SOMATOTROPIN,PROLACTIN"/>
    <property type="match status" value="1"/>
</dbReference>
<dbReference type="Pfam" id="PF00103">
    <property type="entry name" value="Hormone_1"/>
    <property type="match status" value="1"/>
</dbReference>
<dbReference type="PRINTS" id="PR00836">
    <property type="entry name" value="SOMATOTROPIN"/>
</dbReference>
<dbReference type="SUPFAM" id="SSF47266">
    <property type="entry name" value="4-helical cytokines"/>
    <property type="match status" value="1"/>
</dbReference>
<dbReference type="PROSITE" id="PS00266">
    <property type="entry name" value="SOMATOTROPIN_1"/>
    <property type="match status" value="1"/>
</dbReference>
<dbReference type="PROSITE" id="PS00338">
    <property type="entry name" value="SOMATOTROPIN_2"/>
    <property type="match status" value="1"/>
</dbReference>